<feature type="chain" id="PRO_0000297713" description="Small ribosomal subunit protein uS12c">
    <location>
        <begin position="1"/>
        <end position="122"/>
    </location>
</feature>
<protein>
    <recommendedName>
        <fullName evidence="2">Small ribosomal subunit protein uS12c</fullName>
    </recommendedName>
    <alternativeName>
        <fullName>30S ribosomal protein S12, chloroplastic</fullName>
    </alternativeName>
</protein>
<accession>A6MMA1</accession>
<name>RR12_CHLSC</name>
<proteinExistence type="inferred from homology"/>
<geneLocation type="chloroplast"/>
<comment type="function">
    <text evidence="1">With S4 and S5 plays an important role in translational accuracy. Located at the interface of the 30S and 50S subunits (By similarity).</text>
</comment>
<comment type="subunit">
    <text evidence="1">Part of the 30S ribosomal subunit.</text>
</comment>
<comment type="subcellular location">
    <subcellularLocation>
        <location>Plastid</location>
        <location>Chloroplast</location>
    </subcellularLocation>
</comment>
<comment type="similarity">
    <text evidence="2">Belongs to the universal ribosomal protein uS12 family.</text>
</comment>
<evidence type="ECO:0000250" key="1"/>
<evidence type="ECO:0000305" key="2"/>
<gene>
    <name type="primary">rps12</name>
</gene>
<sequence length="122" mass="13610">MPTIKQLIRNTRQPIRNVTKSPALRGCPQRRGTCTRVYTITPKKPNSALRKVARVRLTSGFEITAYIPGIGHNSQEHSVVLVRGGRVKDLPGVRYHIVRGTLDAVGVKDRQQGRSYGVKKPK</sequence>
<reference key="1">
    <citation type="journal article" date="2007" name="Mol. Phylogenet. Evol.">
        <title>Phylogenetic and evolutionary implications of complete chloroplast genome sequences of four early-diverging angiosperms: Buxus (Buxaceae), Chloranthus (Chloranthaceae), Dioscorea (Dioscoreaceae), and Illicium (Schisandraceae).</title>
        <authorList>
            <person name="Hansen D.R."/>
            <person name="Dastidar S.G."/>
            <person name="Cai Z."/>
            <person name="Penaflor C."/>
            <person name="Kuehl J.V."/>
            <person name="Boore J.L."/>
            <person name="Jansen R.K."/>
        </authorList>
    </citation>
    <scope>NUCLEOTIDE SEQUENCE [LARGE SCALE GENOMIC DNA]</scope>
</reference>
<dbReference type="EMBL" id="EF380352">
    <property type="protein sequence ID" value="ABQ43325.1"/>
    <property type="molecule type" value="Genomic_DNA"/>
</dbReference>
<dbReference type="RefSeq" id="YP_001294077.1">
    <property type="nucleotide sequence ID" value="NC_009598.1"/>
</dbReference>
<dbReference type="SMR" id="A6MMA1"/>
<dbReference type="GeneID" id="5236526"/>
<dbReference type="GO" id="GO:0009507">
    <property type="term" value="C:chloroplast"/>
    <property type="evidence" value="ECO:0007669"/>
    <property type="project" value="UniProtKB-SubCell"/>
</dbReference>
<dbReference type="GO" id="GO:0015935">
    <property type="term" value="C:small ribosomal subunit"/>
    <property type="evidence" value="ECO:0007669"/>
    <property type="project" value="InterPro"/>
</dbReference>
<dbReference type="GO" id="GO:0019843">
    <property type="term" value="F:rRNA binding"/>
    <property type="evidence" value="ECO:0007669"/>
    <property type="project" value="UniProtKB-UniRule"/>
</dbReference>
<dbReference type="GO" id="GO:0003735">
    <property type="term" value="F:structural constituent of ribosome"/>
    <property type="evidence" value="ECO:0007669"/>
    <property type="project" value="InterPro"/>
</dbReference>
<dbReference type="GO" id="GO:0006412">
    <property type="term" value="P:translation"/>
    <property type="evidence" value="ECO:0007669"/>
    <property type="project" value="UniProtKB-UniRule"/>
</dbReference>
<dbReference type="CDD" id="cd03368">
    <property type="entry name" value="Ribosomal_S12"/>
    <property type="match status" value="1"/>
</dbReference>
<dbReference type="FunFam" id="2.40.50.140:FF:000008">
    <property type="entry name" value="30S ribosomal protein S12, chloroplastic"/>
    <property type="match status" value="1"/>
</dbReference>
<dbReference type="Gene3D" id="2.40.50.140">
    <property type="entry name" value="Nucleic acid-binding proteins"/>
    <property type="match status" value="1"/>
</dbReference>
<dbReference type="HAMAP" id="MF_00403_B">
    <property type="entry name" value="Ribosomal_uS12_B"/>
    <property type="match status" value="1"/>
</dbReference>
<dbReference type="InterPro" id="IPR012340">
    <property type="entry name" value="NA-bd_OB-fold"/>
</dbReference>
<dbReference type="InterPro" id="IPR006032">
    <property type="entry name" value="Ribosomal_uS12"/>
</dbReference>
<dbReference type="InterPro" id="IPR005679">
    <property type="entry name" value="Ribosomal_uS12_bac"/>
</dbReference>
<dbReference type="NCBIfam" id="TIGR00981">
    <property type="entry name" value="rpsL_bact"/>
    <property type="match status" value="1"/>
</dbReference>
<dbReference type="PANTHER" id="PTHR11652">
    <property type="entry name" value="30S RIBOSOMAL PROTEIN S12 FAMILY MEMBER"/>
    <property type="match status" value="1"/>
</dbReference>
<dbReference type="Pfam" id="PF00164">
    <property type="entry name" value="Ribosom_S12_S23"/>
    <property type="match status" value="1"/>
</dbReference>
<dbReference type="PIRSF" id="PIRSF002133">
    <property type="entry name" value="Ribosomal_S12/S23"/>
    <property type="match status" value="1"/>
</dbReference>
<dbReference type="PRINTS" id="PR01034">
    <property type="entry name" value="RIBOSOMALS12"/>
</dbReference>
<dbReference type="SUPFAM" id="SSF50249">
    <property type="entry name" value="Nucleic acid-binding proteins"/>
    <property type="match status" value="1"/>
</dbReference>
<dbReference type="PROSITE" id="PS00055">
    <property type="entry name" value="RIBOSOMAL_S12"/>
    <property type="match status" value="1"/>
</dbReference>
<keyword id="KW-0150">Chloroplast</keyword>
<keyword id="KW-0934">Plastid</keyword>
<keyword id="KW-0687">Ribonucleoprotein</keyword>
<keyword id="KW-0689">Ribosomal protein</keyword>
<keyword id="KW-0694">RNA-binding</keyword>
<keyword id="KW-0699">rRNA-binding</keyword>
<organism>
    <name type="scientific">Chloranthus spicatus</name>
    <name type="common">Chulantree</name>
    <name type="synonym">Nigrina spicata</name>
    <dbReference type="NCBI Taxonomy" id="13006"/>
    <lineage>
        <taxon>Eukaryota</taxon>
        <taxon>Viridiplantae</taxon>
        <taxon>Streptophyta</taxon>
        <taxon>Embryophyta</taxon>
        <taxon>Tracheophyta</taxon>
        <taxon>Spermatophyta</taxon>
        <taxon>Magnoliopsida</taxon>
        <taxon>Chloranthales</taxon>
        <taxon>Chloranthaceae</taxon>
        <taxon>Chloranthus</taxon>
    </lineage>
</organism>